<comment type="function">
    <text evidence="1">Binds to 23S rRNA. Forms part of two intersubunit bridges in the 70S ribosome.</text>
</comment>
<comment type="subunit">
    <text evidence="1">Part of the 50S ribosomal subunit. Forms a cluster with proteins L3 and L19. In the 70S ribosome, L14 and L19 interact and together make contacts with the 16S rRNA in bridges B5 and B8.</text>
</comment>
<comment type="similarity">
    <text evidence="1">Belongs to the universal ribosomal protein uL14 family.</text>
</comment>
<dbReference type="EMBL" id="CP000667">
    <property type="protein sequence ID" value="ABP56343.1"/>
    <property type="molecule type" value="Genomic_DNA"/>
</dbReference>
<dbReference type="RefSeq" id="WP_007073026.1">
    <property type="nucleotide sequence ID" value="NC_009380.1"/>
</dbReference>
<dbReference type="SMR" id="A4XBN6"/>
<dbReference type="STRING" id="369723.Strop_3913"/>
<dbReference type="GeneID" id="95368522"/>
<dbReference type="KEGG" id="stp:Strop_3913"/>
<dbReference type="eggNOG" id="COG0093">
    <property type="taxonomic scope" value="Bacteria"/>
</dbReference>
<dbReference type="HOGENOM" id="CLU_095071_2_1_11"/>
<dbReference type="Proteomes" id="UP000000235">
    <property type="component" value="Chromosome"/>
</dbReference>
<dbReference type="GO" id="GO:0022625">
    <property type="term" value="C:cytosolic large ribosomal subunit"/>
    <property type="evidence" value="ECO:0007669"/>
    <property type="project" value="TreeGrafter"/>
</dbReference>
<dbReference type="GO" id="GO:0070180">
    <property type="term" value="F:large ribosomal subunit rRNA binding"/>
    <property type="evidence" value="ECO:0007669"/>
    <property type="project" value="TreeGrafter"/>
</dbReference>
<dbReference type="GO" id="GO:0003735">
    <property type="term" value="F:structural constituent of ribosome"/>
    <property type="evidence" value="ECO:0007669"/>
    <property type="project" value="InterPro"/>
</dbReference>
<dbReference type="GO" id="GO:0006412">
    <property type="term" value="P:translation"/>
    <property type="evidence" value="ECO:0007669"/>
    <property type="project" value="UniProtKB-UniRule"/>
</dbReference>
<dbReference type="CDD" id="cd00337">
    <property type="entry name" value="Ribosomal_uL14"/>
    <property type="match status" value="1"/>
</dbReference>
<dbReference type="FunFam" id="2.40.150.20:FF:000001">
    <property type="entry name" value="50S ribosomal protein L14"/>
    <property type="match status" value="1"/>
</dbReference>
<dbReference type="Gene3D" id="2.40.150.20">
    <property type="entry name" value="Ribosomal protein L14"/>
    <property type="match status" value="1"/>
</dbReference>
<dbReference type="HAMAP" id="MF_01367">
    <property type="entry name" value="Ribosomal_uL14"/>
    <property type="match status" value="1"/>
</dbReference>
<dbReference type="InterPro" id="IPR000218">
    <property type="entry name" value="Ribosomal_uL14"/>
</dbReference>
<dbReference type="InterPro" id="IPR005745">
    <property type="entry name" value="Ribosomal_uL14_bac-type"/>
</dbReference>
<dbReference type="InterPro" id="IPR019972">
    <property type="entry name" value="Ribosomal_uL14_CS"/>
</dbReference>
<dbReference type="InterPro" id="IPR036853">
    <property type="entry name" value="Ribosomal_uL14_sf"/>
</dbReference>
<dbReference type="NCBIfam" id="TIGR01067">
    <property type="entry name" value="rplN_bact"/>
    <property type="match status" value="1"/>
</dbReference>
<dbReference type="PANTHER" id="PTHR11761">
    <property type="entry name" value="50S/60S RIBOSOMAL PROTEIN L14/L23"/>
    <property type="match status" value="1"/>
</dbReference>
<dbReference type="PANTHER" id="PTHR11761:SF3">
    <property type="entry name" value="LARGE RIBOSOMAL SUBUNIT PROTEIN UL14M"/>
    <property type="match status" value="1"/>
</dbReference>
<dbReference type="Pfam" id="PF00238">
    <property type="entry name" value="Ribosomal_L14"/>
    <property type="match status" value="1"/>
</dbReference>
<dbReference type="SMART" id="SM01374">
    <property type="entry name" value="Ribosomal_L14"/>
    <property type="match status" value="1"/>
</dbReference>
<dbReference type="SUPFAM" id="SSF50193">
    <property type="entry name" value="Ribosomal protein L14"/>
    <property type="match status" value="1"/>
</dbReference>
<dbReference type="PROSITE" id="PS00049">
    <property type="entry name" value="RIBOSOMAL_L14"/>
    <property type="match status" value="1"/>
</dbReference>
<feature type="chain" id="PRO_1000087145" description="Large ribosomal subunit protein uL14">
    <location>
        <begin position="1"/>
        <end position="122"/>
    </location>
</feature>
<evidence type="ECO:0000255" key="1">
    <source>
        <dbReference type="HAMAP-Rule" id="MF_01367"/>
    </source>
</evidence>
<evidence type="ECO:0000305" key="2"/>
<organism>
    <name type="scientific">Salinispora tropica (strain ATCC BAA-916 / DSM 44818 / JCM 13857 / NBRC 105044 / CNB-440)</name>
    <dbReference type="NCBI Taxonomy" id="369723"/>
    <lineage>
        <taxon>Bacteria</taxon>
        <taxon>Bacillati</taxon>
        <taxon>Actinomycetota</taxon>
        <taxon>Actinomycetes</taxon>
        <taxon>Micromonosporales</taxon>
        <taxon>Micromonosporaceae</taxon>
        <taxon>Salinispora</taxon>
    </lineage>
</organism>
<protein>
    <recommendedName>
        <fullName evidence="1">Large ribosomal subunit protein uL14</fullName>
    </recommendedName>
    <alternativeName>
        <fullName evidence="2">50S ribosomal protein L14</fullName>
    </alternativeName>
</protein>
<accession>A4XBN6</accession>
<name>RL14_SALTO</name>
<reference key="1">
    <citation type="journal article" date="2007" name="Proc. Natl. Acad. Sci. U.S.A.">
        <title>Genome sequencing reveals complex secondary metabolome in the marine actinomycete Salinispora tropica.</title>
        <authorList>
            <person name="Udwary D.W."/>
            <person name="Zeigler L."/>
            <person name="Asolkar R.N."/>
            <person name="Singan V."/>
            <person name="Lapidus A."/>
            <person name="Fenical W."/>
            <person name="Jensen P.R."/>
            <person name="Moore B.S."/>
        </authorList>
    </citation>
    <scope>NUCLEOTIDE SEQUENCE [LARGE SCALE GENOMIC DNA]</scope>
    <source>
        <strain>ATCC BAA-916 / DSM 44818 / JCM 13857 / NBRC 105044 / CNB-440</strain>
    </source>
</reference>
<proteinExistence type="inferred from homology"/>
<sequence>MIQQESRLRVADNTGAREILCIRVLGGSGRRYASIGDVIVATVKDAIPGAGVKKGDVVKAVVVRTAKEKRRPDGSYIRFDENAAVIIKDGGDPRGTRIFGPVGRELRDKRFMKIISLAPEVL</sequence>
<keyword id="KW-1185">Reference proteome</keyword>
<keyword id="KW-0687">Ribonucleoprotein</keyword>
<keyword id="KW-0689">Ribosomal protein</keyword>
<keyword id="KW-0694">RNA-binding</keyword>
<keyword id="KW-0699">rRNA-binding</keyword>
<gene>
    <name evidence="1" type="primary">rplN</name>
    <name type="ordered locus">Strop_3913</name>
</gene>